<organism>
    <name type="scientific">Bacillus subtilis (strain 168)</name>
    <dbReference type="NCBI Taxonomy" id="224308"/>
    <lineage>
        <taxon>Bacteria</taxon>
        <taxon>Bacillati</taxon>
        <taxon>Bacillota</taxon>
        <taxon>Bacilli</taxon>
        <taxon>Bacillales</taxon>
        <taxon>Bacillaceae</taxon>
        <taxon>Bacillus</taxon>
    </lineage>
</organism>
<evidence type="ECO:0000255" key="1">
    <source>
        <dbReference type="HAMAP-Rule" id="MF_00945"/>
    </source>
</evidence>
<evidence type="ECO:0000256" key="2">
    <source>
        <dbReference type="SAM" id="MobiDB-lite"/>
    </source>
</evidence>
<evidence type="ECO:0000305" key="3"/>
<evidence type="ECO:0007829" key="4">
    <source>
        <dbReference type="PDB" id="2MT4"/>
    </source>
</evidence>
<reference key="1">
    <citation type="journal article" date="1993" name="J. Bacteriol.">
        <title>Similar organization of the nusA-infB operon in Bacillus subtilis and Escherichia coli.</title>
        <authorList>
            <person name="Shazand K."/>
            <person name="Tucker J."/>
            <person name="Grunberg-Manago M."/>
            <person name="Rabinowitz J.C."/>
            <person name="Leighton T."/>
        </authorList>
    </citation>
    <scope>NUCLEOTIDE SEQUENCE [GENOMIC DNA]</scope>
    <source>
        <strain>168</strain>
    </source>
</reference>
<reference key="2">
    <citation type="journal article" date="1997" name="Nature">
        <title>The complete genome sequence of the Gram-positive bacterium Bacillus subtilis.</title>
        <authorList>
            <person name="Kunst F."/>
            <person name="Ogasawara N."/>
            <person name="Moszer I."/>
            <person name="Albertini A.M."/>
            <person name="Alloni G."/>
            <person name="Azevedo V."/>
            <person name="Bertero M.G."/>
            <person name="Bessieres P."/>
            <person name="Bolotin A."/>
            <person name="Borchert S."/>
            <person name="Borriss R."/>
            <person name="Boursier L."/>
            <person name="Brans A."/>
            <person name="Braun M."/>
            <person name="Brignell S.C."/>
            <person name="Bron S."/>
            <person name="Brouillet S."/>
            <person name="Bruschi C.V."/>
            <person name="Caldwell B."/>
            <person name="Capuano V."/>
            <person name="Carter N.M."/>
            <person name="Choi S.-K."/>
            <person name="Codani J.-J."/>
            <person name="Connerton I.F."/>
            <person name="Cummings N.J."/>
            <person name="Daniel R.A."/>
            <person name="Denizot F."/>
            <person name="Devine K.M."/>
            <person name="Duesterhoeft A."/>
            <person name="Ehrlich S.D."/>
            <person name="Emmerson P.T."/>
            <person name="Entian K.-D."/>
            <person name="Errington J."/>
            <person name="Fabret C."/>
            <person name="Ferrari E."/>
            <person name="Foulger D."/>
            <person name="Fritz C."/>
            <person name="Fujita M."/>
            <person name="Fujita Y."/>
            <person name="Fuma S."/>
            <person name="Galizzi A."/>
            <person name="Galleron N."/>
            <person name="Ghim S.-Y."/>
            <person name="Glaser P."/>
            <person name="Goffeau A."/>
            <person name="Golightly E.J."/>
            <person name="Grandi G."/>
            <person name="Guiseppi G."/>
            <person name="Guy B.J."/>
            <person name="Haga K."/>
            <person name="Haiech J."/>
            <person name="Harwood C.R."/>
            <person name="Henaut A."/>
            <person name="Hilbert H."/>
            <person name="Holsappel S."/>
            <person name="Hosono S."/>
            <person name="Hullo M.-F."/>
            <person name="Itaya M."/>
            <person name="Jones L.-M."/>
            <person name="Joris B."/>
            <person name="Karamata D."/>
            <person name="Kasahara Y."/>
            <person name="Klaerr-Blanchard M."/>
            <person name="Klein C."/>
            <person name="Kobayashi Y."/>
            <person name="Koetter P."/>
            <person name="Koningstein G."/>
            <person name="Krogh S."/>
            <person name="Kumano M."/>
            <person name="Kurita K."/>
            <person name="Lapidus A."/>
            <person name="Lardinois S."/>
            <person name="Lauber J."/>
            <person name="Lazarevic V."/>
            <person name="Lee S.-M."/>
            <person name="Levine A."/>
            <person name="Liu H."/>
            <person name="Masuda S."/>
            <person name="Mauel C."/>
            <person name="Medigue C."/>
            <person name="Medina N."/>
            <person name="Mellado R.P."/>
            <person name="Mizuno M."/>
            <person name="Moestl D."/>
            <person name="Nakai S."/>
            <person name="Noback M."/>
            <person name="Noone D."/>
            <person name="O'Reilly M."/>
            <person name="Ogawa K."/>
            <person name="Ogiwara A."/>
            <person name="Oudega B."/>
            <person name="Park S.-H."/>
            <person name="Parro V."/>
            <person name="Pohl T.M."/>
            <person name="Portetelle D."/>
            <person name="Porwollik S."/>
            <person name="Prescott A.M."/>
            <person name="Presecan E."/>
            <person name="Pujic P."/>
            <person name="Purnelle B."/>
            <person name="Rapoport G."/>
            <person name="Rey M."/>
            <person name="Reynolds S."/>
            <person name="Rieger M."/>
            <person name="Rivolta C."/>
            <person name="Rocha E."/>
            <person name="Roche B."/>
            <person name="Rose M."/>
            <person name="Sadaie Y."/>
            <person name="Sato T."/>
            <person name="Scanlan E."/>
            <person name="Schleich S."/>
            <person name="Schroeter R."/>
            <person name="Scoffone F."/>
            <person name="Sekiguchi J."/>
            <person name="Sekowska A."/>
            <person name="Seror S.J."/>
            <person name="Serror P."/>
            <person name="Shin B.-S."/>
            <person name="Soldo B."/>
            <person name="Sorokin A."/>
            <person name="Tacconi E."/>
            <person name="Takagi T."/>
            <person name="Takahashi H."/>
            <person name="Takemaru K."/>
            <person name="Takeuchi M."/>
            <person name="Tamakoshi A."/>
            <person name="Tanaka T."/>
            <person name="Terpstra P."/>
            <person name="Tognoni A."/>
            <person name="Tosato V."/>
            <person name="Uchiyama S."/>
            <person name="Vandenbol M."/>
            <person name="Vannier F."/>
            <person name="Vassarotti A."/>
            <person name="Viari A."/>
            <person name="Wambutt R."/>
            <person name="Wedler E."/>
            <person name="Wedler H."/>
            <person name="Weitzenegger T."/>
            <person name="Winters P."/>
            <person name="Wipat A."/>
            <person name="Yamamoto H."/>
            <person name="Yamane K."/>
            <person name="Yasumoto K."/>
            <person name="Yata K."/>
            <person name="Yoshida K."/>
            <person name="Yoshikawa H.-F."/>
            <person name="Zumstein E."/>
            <person name="Yoshikawa H."/>
            <person name="Danchin A."/>
        </authorList>
    </citation>
    <scope>NUCLEOTIDE SEQUENCE [LARGE SCALE GENOMIC DNA]</scope>
    <source>
        <strain>168</strain>
    </source>
</reference>
<sequence>MSSELLDALTILEKEKGISKEIIIEAIEAALISAYKRNFNQAQNVRVDLNRETGSIRVFARKDVVDEVYDQRLEISIEEAQGIHPEYMVGDVVEIEVTPKDFGRIAAQTAKQVVTQRVREAERGVIYSEFIDREEDIMTGIVQRLDNKFIYVSLGKIEALLPVNEQMPNESYKPHDRIKVYITKVEKTTKGPQIYVSRTHPGLLKRLFEIEVPEIYDGTVELKSVAREAGDRSKISVRTDDPDVDPVGSCVGPKGQRVQAIVNELKGEKIDIVNWSSDPVEFVANALSPSKVLDVIVNEEEKATTVIVPDYQLSLAIGKRGQNARLAAKLTGWKIDIKSETDARELGIYPRELEEDDEPLFTEPETAESDE</sequence>
<name>NUSA_BACSU</name>
<comment type="function">
    <text evidence="1">Participates in both transcription termination and antitermination.</text>
</comment>
<comment type="subunit">
    <text evidence="1">Monomer. Binds directly to the core enzyme of the DNA-dependent RNA polymerase and to nascent RNA.</text>
</comment>
<comment type="subcellular location">
    <subcellularLocation>
        <location evidence="1">Cytoplasm</location>
    </subcellularLocation>
</comment>
<comment type="similarity">
    <text evidence="1">Belongs to the NusA family.</text>
</comment>
<protein>
    <recommendedName>
        <fullName evidence="1">Transcription termination/antitermination protein NusA</fullName>
    </recommendedName>
</protein>
<gene>
    <name evidence="1" type="primary">nusA</name>
    <name type="ordered locus">BSU16600</name>
</gene>
<proteinExistence type="evidence at protein level"/>
<feature type="chain" id="PRO_0000181960" description="Transcription termination/antitermination protein NusA">
    <location>
        <begin position="1"/>
        <end position="371"/>
    </location>
</feature>
<feature type="domain" description="S1 motif" evidence="1">
    <location>
        <begin position="135"/>
        <end position="199"/>
    </location>
</feature>
<feature type="domain" description="KH" evidence="1">
    <location>
        <begin position="301"/>
        <end position="367"/>
    </location>
</feature>
<feature type="region of interest" description="Disordered" evidence="2">
    <location>
        <begin position="347"/>
        <end position="371"/>
    </location>
</feature>
<feature type="compositionally biased region" description="Acidic residues" evidence="2">
    <location>
        <begin position="353"/>
        <end position="371"/>
    </location>
</feature>
<feature type="sequence conflict" description="In Ref. 1; CAA79231." evidence="3" ref="1">
    <original>KQ</original>
    <variation>NE</variation>
    <location>
        <begin position="111"/>
        <end position="112"/>
    </location>
</feature>
<feature type="helix" evidence="4">
    <location>
        <begin position="4"/>
        <end position="13"/>
    </location>
</feature>
<feature type="helix" evidence="4">
    <location>
        <begin position="20"/>
        <end position="36"/>
    </location>
</feature>
<feature type="turn" evidence="4">
    <location>
        <begin position="40"/>
        <end position="42"/>
    </location>
</feature>
<feature type="strand" evidence="4">
    <location>
        <begin position="46"/>
        <end position="50"/>
    </location>
</feature>
<feature type="turn" evidence="4">
    <location>
        <begin position="51"/>
        <end position="54"/>
    </location>
</feature>
<feature type="strand" evidence="4">
    <location>
        <begin position="55"/>
        <end position="67"/>
    </location>
</feature>
<feature type="helix" evidence="4">
    <location>
        <begin position="77"/>
        <end position="81"/>
    </location>
</feature>
<feature type="strand" evidence="4">
    <location>
        <begin position="92"/>
        <end position="96"/>
    </location>
</feature>
<feature type="helix" evidence="4">
    <location>
        <begin position="102"/>
        <end position="123"/>
    </location>
</feature>
<keyword id="KW-0002">3D-structure</keyword>
<keyword id="KW-0963">Cytoplasm</keyword>
<keyword id="KW-1185">Reference proteome</keyword>
<keyword id="KW-0694">RNA-binding</keyword>
<keyword id="KW-0804">Transcription</keyword>
<keyword id="KW-0889">Transcription antitermination</keyword>
<keyword id="KW-0805">Transcription regulation</keyword>
<keyword id="KW-0806">Transcription termination</keyword>
<accession>P32727</accession>
<accession>O31756</accession>
<dbReference type="EMBL" id="Z18631">
    <property type="protein sequence ID" value="CAA79231.1"/>
    <property type="molecule type" value="Genomic_DNA"/>
</dbReference>
<dbReference type="EMBL" id="AL009126">
    <property type="protein sequence ID" value="CAB13533.1"/>
    <property type="molecule type" value="Genomic_DNA"/>
</dbReference>
<dbReference type="PIR" id="C36905">
    <property type="entry name" value="C36905"/>
</dbReference>
<dbReference type="RefSeq" id="NP_389542.1">
    <property type="nucleotide sequence ID" value="NC_000964.3"/>
</dbReference>
<dbReference type="RefSeq" id="WP_003231912.1">
    <property type="nucleotide sequence ID" value="NZ_OZ025638.1"/>
</dbReference>
<dbReference type="PDB" id="2MT4">
    <property type="method" value="NMR"/>
    <property type="chains" value="A=1-124"/>
</dbReference>
<dbReference type="PDBsum" id="2MT4"/>
<dbReference type="BMRB" id="P32727"/>
<dbReference type="SMR" id="P32727"/>
<dbReference type="FunCoup" id="P32727">
    <property type="interactions" value="464"/>
</dbReference>
<dbReference type="IntAct" id="P32727">
    <property type="interactions" value="1"/>
</dbReference>
<dbReference type="MINT" id="P32727"/>
<dbReference type="STRING" id="224308.BSU16600"/>
<dbReference type="jPOST" id="P32727"/>
<dbReference type="PaxDb" id="224308-BSU16600"/>
<dbReference type="EnsemblBacteria" id="CAB13533">
    <property type="protein sequence ID" value="CAB13533"/>
    <property type="gene ID" value="BSU_16600"/>
</dbReference>
<dbReference type="GeneID" id="939628"/>
<dbReference type="KEGG" id="bsu:BSU16600"/>
<dbReference type="PATRIC" id="fig|224308.179.peg.1801"/>
<dbReference type="eggNOG" id="COG0195">
    <property type="taxonomic scope" value="Bacteria"/>
</dbReference>
<dbReference type="InParanoid" id="P32727"/>
<dbReference type="OrthoDB" id="9807233at2"/>
<dbReference type="PhylomeDB" id="P32727"/>
<dbReference type="BioCyc" id="BSUB:BSU16600-MONOMER"/>
<dbReference type="EvolutionaryTrace" id="P32727"/>
<dbReference type="Proteomes" id="UP000001570">
    <property type="component" value="Chromosome"/>
</dbReference>
<dbReference type="GO" id="GO:0005829">
    <property type="term" value="C:cytosol"/>
    <property type="evidence" value="ECO:0000318"/>
    <property type="project" value="GO_Central"/>
</dbReference>
<dbReference type="GO" id="GO:0003700">
    <property type="term" value="F:DNA-binding transcription factor activity"/>
    <property type="evidence" value="ECO:0007669"/>
    <property type="project" value="InterPro"/>
</dbReference>
<dbReference type="GO" id="GO:0003723">
    <property type="term" value="F:RNA binding"/>
    <property type="evidence" value="ECO:0007669"/>
    <property type="project" value="UniProtKB-UniRule"/>
</dbReference>
<dbReference type="GO" id="GO:0006353">
    <property type="term" value="P:DNA-templated transcription termination"/>
    <property type="evidence" value="ECO:0007669"/>
    <property type="project" value="UniProtKB-UniRule"/>
</dbReference>
<dbReference type="GO" id="GO:0031564">
    <property type="term" value="P:transcription antitermination"/>
    <property type="evidence" value="ECO:0000318"/>
    <property type="project" value="GO_Central"/>
</dbReference>
<dbReference type="CDD" id="cd02134">
    <property type="entry name" value="KH-II_NusA_rpt1"/>
    <property type="match status" value="1"/>
</dbReference>
<dbReference type="CDD" id="cd22529">
    <property type="entry name" value="KH-II_NusA_rpt2"/>
    <property type="match status" value="1"/>
</dbReference>
<dbReference type="CDD" id="cd04455">
    <property type="entry name" value="S1_NusA"/>
    <property type="match status" value="1"/>
</dbReference>
<dbReference type="FunFam" id="2.40.50.140:FF:000058">
    <property type="entry name" value="Transcription termination/antitermination protein NusA"/>
    <property type="match status" value="1"/>
</dbReference>
<dbReference type="FunFam" id="3.30.1480.10:FF:000002">
    <property type="entry name" value="Transcription termination/antitermination protein NusA"/>
    <property type="match status" value="1"/>
</dbReference>
<dbReference type="FunFam" id="3.30.300.20:FF:000002">
    <property type="entry name" value="Transcription termination/antitermination protein NusA"/>
    <property type="match status" value="1"/>
</dbReference>
<dbReference type="FunFam" id="3.30.300.20:FF:000005">
    <property type="entry name" value="Transcription termination/antitermination protein NusA"/>
    <property type="match status" value="1"/>
</dbReference>
<dbReference type="Gene3D" id="3.30.300.20">
    <property type="match status" value="2"/>
</dbReference>
<dbReference type="Gene3D" id="2.40.50.140">
    <property type="entry name" value="Nucleic acid-binding proteins"/>
    <property type="match status" value="1"/>
</dbReference>
<dbReference type="Gene3D" id="3.30.1480.10">
    <property type="entry name" value="NusA, N-terminal domain"/>
    <property type="match status" value="1"/>
</dbReference>
<dbReference type="HAMAP" id="MF_00945_B">
    <property type="entry name" value="NusA_B"/>
    <property type="match status" value="1"/>
</dbReference>
<dbReference type="InterPro" id="IPR004087">
    <property type="entry name" value="KH_dom"/>
</dbReference>
<dbReference type="InterPro" id="IPR015946">
    <property type="entry name" value="KH_dom-like_a/b"/>
</dbReference>
<dbReference type="InterPro" id="IPR025249">
    <property type="entry name" value="KH_dom_NusA-like"/>
</dbReference>
<dbReference type="InterPro" id="IPR009019">
    <property type="entry name" value="KH_sf_prok-type"/>
</dbReference>
<dbReference type="InterPro" id="IPR012340">
    <property type="entry name" value="NA-bd_OB-fold"/>
</dbReference>
<dbReference type="InterPro" id="IPR030842">
    <property type="entry name" value="NusA_bac"/>
</dbReference>
<dbReference type="InterPro" id="IPR036555">
    <property type="entry name" value="NusA_N_sf"/>
</dbReference>
<dbReference type="InterPro" id="IPR003029">
    <property type="entry name" value="S1_domain"/>
</dbReference>
<dbReference type="InterPro" id="IPR013735">
    <property type="entry name" value="TF_NusA_N"/>
</dbReference>
<dbReference type="InterPro" id="IPR010213">
    <property type="entry name" value="Tscrpt_termination_fac_NusA"/>
</dbReference>
<dbReference type="NCBIfam" id="TIGR01953">
    <property type="entry name" value="NusA"/>
    <property type="match status" value="1"/>
</dbReference>
<dbReference type="PANTHER" id="PTHR22648">
    <property type="entry name" value="TRANSCRIPTION TERMINATION FACTOR NUSA"/>
    <property type="match status" value="1"/>
</dbReference>
<dbReference type="PANTHER" id="PTHR22648:SF0">
    <property type="entry name" value="TRANSCRIPTION TERMINATION_ANTITERMINATION PROTEIN NUSA"/>
    <property type="match status" value="1"/>
</dbReference>
<dbReference type="Pfam" id="PF13184">
    <property type="entry name" value="KH_5"/>
    <property type="match status" value="1"/>
</dbReference>
<dbReference type="Pfam" id="PF08529">
    <property type="entry name" value="NusA_N"/>
    <property type="match status" value="1"/>
</dbReference>
<dbReference type="Pfam" id="PF00575">
    <property type="entry name" value="S1"/>
    <property type="match status" value="1"/>
</dbReference>
<dbReference type="SMART" id="SM00322">
    <property type="entry name" value="KH"/>
    <property type="match status" value="2"/>
</dbReference>
<dbReference type="SMART" id="SM00316">
    <property type="entry name" value="S1"/>
    <property type="match status" value="1"/>
</dbReference>
<dbReference type="SUPFAM" id="SSF50249">
    <property type="entry name" value="Nucleic acid-binding proteins"/>
    <property type="match status" value="1"/>
</dbReference>
<dbReference type="SUPFAM" id="SSF54814">
    <property type="entry name" value="Prokaryotic type KH domain (KH-domain type II)"/>
    <property type="match status" value="2"/>
</dbReference>
<dbReference type="SUPFAM" id="SSF69705">
    <property type="entry name" value="Transcription factor NusA, N-terminal domain"/>
    <property type="match status" value="1"/>
</dbReference>
<dbReference type="PROSITE" id="PS50084">
    <property type="entry name" value="KH_TYPE_1"/>
    <property type="match status" value="1"/>
</dbReference>
<dbReference type="PROSITE" id="PS50126">
    <property type="entry name" value="S1"/>
    <property type="match status" value="1"/>
</dbReference>